<dbReference type="EMBL" id="CP000872">
    <property type="protein sequence ID" value="ABX62788.1"/>
    <property type="status" value="ALT_INIT"/>
    <property type="molecule type" value="Genomic_DNA"/>
</dbReference>
<dbReference type="SMR" id="A9M7P1"/>
<dbReference type="KEGG" id="bcs:BCAN_A1784"/>
<dbReference type="HOGENOM" id="CLU_135723_3_3_5"/>
<dbReference type="Proteomes" id="UP000001385">
    <property type="component" value="Chromosome I"/>
</dbReference>
<dbReference type="GO" id="GO:1990904">
    <property type="term" value="C:ribonucleoprotein complex"/>
    <property type="evidence" value="ECO:0007669"/>
    <property type="project" value="UniProtKB-KW"/>
</dbReference>
<dbReference type="GO" id="GO:0005840">
    <property type="term" value="C:ribosome"/>
    <property type="evidence" value="ECO:0007669"/>
    <property type="project" value="UniProtKB-KW"/>
</dbReference>
<dbReference type="GO" id="GO:0003735">
    <property type="term" value="F:structural constituent of ribosome"/>
    <property type="evidence" value="ECO:0007669"/>
    <property type="project" value="InterPro"/>
</dbReference>
<dbReference type="GO" id="GO:0006412">
    <property type="term" value="P:translation"/>
    <property type="evidence" value="ECO:0007669"/>
    <property type="project" value="UniProtKB-UniRule"/>
</dbReference>
<dbReference type="HAMAP" id="MF_00251">
    <property type="entry name" value="Ribosomal_bL36"/>
    <property type="match status" value="1"/>
</dbReference>
<dbReference type="InterPro" id="IPR000473">
    <property type="entry name" value="Ribosomal_bL36"/>
</dbReference>
<dbReference type="InterPro" id="IPR035977">
    <property type="entry name" value="Ribosomal_bL36_sp"/>
</dbReference>
<dbReference type="InterPro" id="IPR047621">
    <property type="entry name" value="Ribosomal_L36_bact"/>
</dbReference>
<dbReference type="NCBIfam" id="NF002021">
    <property type="entry name" value="PRK00831.1"/>
    <property type="match status" value="1"/>
</dbReference>
<dbReference type="NCBIfam" id="TIGR01022">
    <property type="entry name" value="rpmJ_bact"/>
    <property type="match status" value="1"/>
</dbReference>
<dbReference type="PANTHER" id="PTHR47781">
    <property type="entry name" value="50S RIBOSOMAL PROTEIN L36 2"/>
    <property type="match status" value="1"/>
</dbReference>
<dbReference type="PANTHER" id="PTHR47781:SF1">
    <property type="entry name" value="LARGE RIBOSOMAL SUBUNIT PROTEIN BL36B"/>
    <property type="match status" value="1"/>
</dbReference>
<dbReference type="Pfam" id="PF00444">
    <property type="entry name" value="Ribosomal_L36"/>
    <property type="match status" value="1"/>
</dbReference>
<dbReference type="SUPFAM" id="SSF57840">
    <property type="entry name" value="Ribosomal protein L36"/>
    <property type="match status" value="1"/>
</dbReference>
<dbReference type="PROSITE" id="PS00828">
    <property type="entry name" value="RIBOSOMAL_L36"/>
    <property type="match status" value="1"/>
</dbReference>
<name>RL36_BRUC2</name>
<keyword id="KW-1185">Reference proteome</keyword>
<keyword id="KW-0687">Ribonucleoprotein</keyword>
<keyword id="KW-0689">Ribosomal protein</keyword>
<proteinExistence type="inferred from homology"/>
<protein>
    <recommendedName>
        <fullName evidence="1">Large ribosomal subunit protein bL36</fullName>
    </recommendedName>
    <alternativeName>
        <fullName evidence="2">50S ribosomal protein L36</fullName>
    </alternativeName>
</protein>
<sequence length="41" mass="4851">MKIKNSLKALKARHRDCQLVRRKGRVYIINKTAPRFKARQG</sequence>
<feature type="chain" id="PRO_0000344646" description="Large ribosomal subunit protein bL36">
    <location>
        <begin position="1"/>
        <end position="41"/>
    </location>
</feature>
<reference key="1">
    <citation type="submission" date="2007-10" db="EMBL/GenBank/DDBJ databases">
        <title>Brucella canis ATCC 23365 whole genome shotgun sequencing project.</title>
        <authorList>
            <person name="Setubal J.C."/>
            <person name="Bowns C."/>
            <person name="Boyle S."/>
            <person name="Crasta O.R."/>
            <person name="Czar M.J."/>
            <person name="Dharmanolla C."/>
            <person name="Gillespie J.J."/>
            <person name="Kenyon R.W."/>
            <person name="Lu J."/>
            <person name="Mane S."/>
            <person name="Mohapatra S."/>
            <person name="Nagrani S."/>
            <person name="Purkayastha A."/>
            <person name="Rajasimha H.K."/>
            <person name="Shallom J.M."/>
            <person name="Shallom S."/>
            <person name="Shukla M."/>
            <person name="Snyder E.E."/>
            <person name="Sobral B.W."/>
            <person name="Wattam A.R."/>
            <person name="Will R."/>
            <person name="Williams K."/>
            <person name="Yoo H."/>
            <person name="Bruce D."/>
            <person name="Detter C."/>
            <person name="Munk C."/>
            <person name="Brettin T.S."/>
        </authorList>
    </citation>
    <scope>NUCLEOTIDE SEQUENCE [LARGE SCALE GENOMIC DNA]</scope>
    <source>
        <strain>ATCC 23365 / NCTC 10854 / RM-666</strain>
    </source>
</reference>
<accession>A9M7P1</accession>
<organism>
    <name type="scientific">Brucella canis (strain ATCC 23365 / NCTC 10854 / RM-666)</name>
    <dbReference type="NCBI Taxonomy" id="483179"/>
    <lineage>
        <taxon>Bacteria</taxon>
        <taxon>Pseudomonadati</taxon>
        <taxon>Pseudomonadota</taxon>
        <taxon>Alphaproteobacteria</taxon>
        <taxon>Hyphomicrobiales</taxon>
        <taxon>Brucellaceae</taxon>
        <taxon>Brucella/Ochrobactrum group</taxon>
        <taxon>Brucella</taxon>
    </lineage>
</organism>
<evidence type="ECO:0000255" key="1">
    <source>
        <dbReference type="HAMAP-Rule" id="MF_00251"/>
    </source>
</evidence>
<evidence type="ECO:0000305" key="2"/>
<comment type="similarity">
    <text evidence="1">Belongs to the bacterial ribosomal protein bL36 family.</text>
</comment>
<comment type="sequence caution" evidence="2">
    <conflict type="erroneous initiation">
        <sequence resource="EMBL-CDS" id="ABX62788"/>
    </conflict>
</comment>
<gene>
    <name evidence="1" type="primary">rpmJ</name>
    <name type="ordered locus">BCAN_A1784</name>
</gene>